<proteinExistence type="inferred from homology"/>
<feature type="chain" id="PRO_1000189344" description="Tyrosine--tRNA ligase">
    <location>
        <begin position="1"/>
        <end position="415"/>
    </location>
</feature>
<feature type="domain" description="S4 RNA-binding" evidence="1">
    <location>
        <begin position="346"/>
        <end position="413"/>
    </location>
</feature>
<feature type="short sequence motif" description="'HIGH' region">
    <location>
        <begin position="39"/>
        <end position="48"/>
    </location>
</feature>
<feature type="short sequence motif" description="'KMSKS' region">
    <location>
        <begin position="224"/>
        <end position="228"/>
    </location>
</feature>
<feature type="binding site" evidence="1">
    <location>
        <position position="34"/>
    </location>
    <ligand>
        <name>L-tyrosine</name>
        <dbReference type="ChEBI" id="CHEBI:58315"/>
    </ligand>
</feature>
<feature type="binding site" evidence="1">
    <location>
        <position position="162"/>
    </location>
    <ligand>
        <name>L-tyrosine</name>
        <dbReference type="ChEBI" id="CHEBI:58315"/>
    </ligand>
</feature>
<feature type="binding site" evidence="1">
    <location>
        <position position="166"/>
    </location>
    <ligand>
        <name>L-tyrosine</name>
        <dbReference type="ChEBI" id="CHEBI:58315"/>
    </ligand>
</feature>
<feature type="binding site" evidence="1">
    <location>
        <position position="227"/>
    </location>
    <ligand>
        <name>ATP</name>
        <dbReference type="ChEBI" id="CHEBI:30616"/>
    </ligand>
</feature>
<sequence>MHNLIKDLKARNLINNITNEEKLKKALAENKGIYVGFDPSADSLHLGNYIMIMLLKRFRLHNIKTFALVGGATGMIGDPSGKSAERNLLDKTILEHNITKIKYQLEKFTNSQVINNYDFYKNMTFLDFLRDVGKLININYLLEKEIISSRLDVGISYTEFSYNLLQGYDFLQLYKNDNIAIQAGGSDQWGNITTGIEIIRKSLGDDNIACGLTINLLTNSEGKKFGKSEKGAIYLDENKSSVYEMYQFLINQTDADVEKLLNFLTLIDVDEINKIMQAHKENPALRIAQKALAQAVVVDVHGQQKYEQALHISQVLFNGNINELNQEEFNIAIKSLPTTKLDKDEIKIIDLLNLANISSSNRVARDFLSTGSILVNDIKVNDENFLVKKQDAINQEFSIIKKGKRNYFLIVWNKD</sequence>
<accession>B5ZAU9</accession>
<keyword id="KW-0030">Aminoacyl-tRNA synthetase</keyword>
<keyword id="KW-0067">ATP-binding</keyword>
<keyword id="KW-0963">Cytoplasm</keyword>
<keyword id="KW-0436">Ligase</keyword>
<keyword id="KW-0547">Nucleotide-binding</keyword>
<keyword id="KW-0648">Protein biosynthesis</keyword>
<keyword id="KW-0694">RNA-binding</keyword>
<dbReference type="EC" id="6.1.1.1" evidence="1"/>
<dbReference type="EMBL" id="CP001184">
    <property type="protein sequence ID" value="ACI59824.1"/>
    <property type="molecule type" value="Genomic_DNA"/>
</dbReference>
<dbReference type="RefSeq" id="WP_004025679.1">
    <property type="nucleotide sequence ID" value="NC_011374.1"/>
</dbReference>
<dbReference type="SMR" id="B5ZAU9"/>
<dbReference type="STRING" id="565575.UUR10_0132"/>
<dbReference type="GeneID" id="93848616"/>
<dbReference type="KEGG" id="uue:UUR10_0132"/>
<dbReference type="eggNOG" id="COG0162">
    <property type="taxonomic scope" value="Bacteria"/>
</dbReference>
<dbReference type="HOGENOM" id="CLU_024003_0_2_14"/>
<dbReference type="OrthoDB" id="9804243at2"/>
<dbReference type="Proteomes" id="UP000002018">
    <property type="component" value="Chromosome"/>
</dbReference>
<dbReference type="GO" id="GO:0005829">
    <property type="term" value="C:cytosol"/>
    <property type="evidence" value="ECO:0007669"/>
    <property type="project" value="TreeGrafter"/>
</dbReference>
<dbReference type="GO" id="GO:0005524">
    <property type="term" value="F:ATP binding"/>
    <property type="evidence" value="ECO:0007669"/>
    <property type="project" value="UniProtKB-UniRule"/>
</dbReference>
<dbReference type="GO" id="GO:0003723">
    <property type="term" value="F:RNA binding"/>
    <property type="evidence" value="ECO:0007669"/>
    <property type="project" value="UniProtKB-KW"/>
</dbReference>
<dbReference type="GO" id="GO:0004831">
    <property type="term" value="F:tyrosine-tRNA ligase activity"/>
    <property type="evidence" value="ECO:0007669"/>
    <property type="project" value="UniProtKB-UniRule"/>
</dbReference>
<dbReference type="GO" id="GO:0006437">
    <property type="term" value="P:tyrosyl-tRNA aminoacylation"/>
    <property type="evidence" value="ECO:0007669"/>
    <property type="project" value="UniProtKB-UniRule"/>
</dbReference>
<dbReference type="CDD" id="cd00805">
    <property type="entry name" value="TyrRS_core"/>
    <property type="match status" value="1"/>
</dbReference>
<dbReference type="FunFam" id="1.10.240.10:FF:000001">
    <property type="entry name" value="Tyrosine--tRNA ligase"/>
    <property type="match status" value="1"/>
</dbReference>
<dbReference type="Gene3D" id="3.40.50.620">
    <property type="entry name" value="HUPs"/>
    <property type="match status" value="1"/>
</dbReference>
<dbReference type="Gene3D" id="3.10.290.10">
    <property type="entry name" value="RNA-binding S4 domain"/>
    <property type="match status" value="1"/>
</dbReference>
<dbReference type="Gene3D" id="1.10.240.10">
    <property type="entry name" value="Tyrosyl-Transfer RNA Synthetase"/>
    <property type="match status" value="1"/>
</dbReference>
<dbReference type="HAMAP" id="MF_02006">
    <property type="entry name" value="Tyr_tRNA_synth_type1"/>
    <property type="match status" value="1"/>
</dbReference>
<dbReference type="InterPro" id="IPR001412">
    <property type="entry name" value="aa-tRNA-synth_I_CS"/>
</dbReference>
<dbReference type="InterPro" id="IPR002305">
    <property type="entry name" value="aa-tRNA-synth_Ic"/>
</dbReference>
<dbReference type="InterPro" id="IPR014729">
    <property type="entry name" value="Rossmann-like_a/b/a_fold"/>
</dbReference>
<dbReference type="InterPro" id="IPR036986">
    <property type="entry name" value="S4_RNA-bd_sf"/>
</dbReference>
<dbReference type="InterPro" id="IPR054608">
    <property type="entry name" value="SYY-like_C"/>
</dbReference>
<dbReference type="InterPro" id="IPR002307">
    <property type="entry name" value="Tyr-tRNA-ligase"/>
</dbReference>
<dbReference type="InterPro" id="IPR024088">
    <property type="entry name" value="Tyr-tRNA-ligase_bac-type"/>
</dbReference>
<dbReference type="InterPro" id="IPR024107">
    <property type="entry name" value="Tyr-tRNA-ligase_bac_1"/>
</dbReference>
<dbReference type="NCBIfam" id="TIGR00234">
    <property type="entry name" value="tyrS"/>
    <property type="match status" value="1"/>
</dbReference>
<dbReference type="PANTHER" id="PTHR11766:SF0">
    <property type="entry name" value="TYROSINE--TRNA LIGASE, MITOCHONDRIAL"/>
    <property type="match status" value="1"/>
</dbReference>
<dbReference type="PANTHER" id="PTHR11766">
    <property type="entry name" value="TYROSYL-TRNA SYNTHETASE"/>
    <property type="match status" value="1"/>
</dbReference>
<dbReference type="Pfam" id="PF22421">
    <property type="entry name" value="SYY_C-terminal"/>
    <property type="match status" value="1"/>
</dbReference>
<dbReference type="Pfam" id="PF00579">
    <property type="entry name" value="tRNA-synt_1b"/>
    <property type="match status" value="1"/>
</dbReference>
<dbReference type="PRINTS" id="PR01040">
    <property type="entry name" value="TRNASYNTHTYR"/>
</dbReference>
<dbReference type="SUPFAM" id="SSF55174">
    <property type="entry name" value="Alpha-L RNA-binding motif"/>
    <property type="match status" value="1"/>
</dbReference>
<dbReference type="SUPFAM" id="SSF52374">
    <property type="entry name" value="Nucleotidylyl transferase"/>
    <property type="match status" value="1"/>
</dbReference>
<dbReference type="PROSITE" id="PS00178">
    <property type="entry name" value="AA_TRNA_LIGASE_I"/>
    <property type="match status" value="1"/>
</dbReference>
<dbReference type="PROSITE" id="PS50889">
    <property type="entry name" value="S4"/>
    <property type="match status" value="1"/>
</dbReference>
<protein>
    <recommendedName>
        <fullName evidence="1">Tyrosine--tRNA ligase</fullName>
        <ecNumber evidence="1">6.1.1.1</ecNumber>
    </recommendedName>
    <alternativeName>
        <fullName evidence="1">Tyrosyl-tRNA synthetase</fullName>
        <shortName evidence="1">TyrRS</shortName>
    </alternativeName>
</protein>
<reference key="1">
    <citation type="submission" date="2008-10" db="EMBL/GenBank/DDBJ databases">
        <title>Genome sequence of Ureaplasma urealyticum serovar 10 ATCC-33699.</title>
        <authorList>
            <person name="Shrivastava S."/>
            <person name="Methe B.A."/>
            <person name="Glass J."/>
            <person name="White K."/>
            <person name="Duffy L.B."/>
        </authorList>
    </citation>
    <scope>NUCLEOTIDE SEQUENCE [LARGE SCALE GENOMIC DNA]</scope>
    <source>
        <strain>ATCC 33699 / Western</strain>
    </source>
</reference>
<gene>
    <name evidence="1" type="primary">tyrS</name>
    <name type="ordered locus">UUR10_0132</name>
</gene>
<name>SYY_UREU1</name>
<organism>
    <name type="scientific">Ureaplasma urealyticum serovar 10 (strain ATCC 33699 / Western)</name>
    <dbReference type="NCBI Taxonomy" id="565575"/>
    <lineage>
        <taxon>Bacteria</taxon>
        <taxon>Bacillati</taxon>
        <taxon>Mycoplasmatota</taxon>
        <taxon>Mycoplasmoidales</taxon>
        <taxon>Mycoplasmoidaceae</taxon>
        <taxon>Ureaplasma</taxon>
    </lineage>
</organism>
<evidence type="ECO:0000255" key="1">
    <source>
        <dbReference type="HAMAP-Rule" id="MF_02006"/>
    </source>
</evidence>
<comment type="function">
    <text evidence="1">Catalyzes the attachment of tyrosine to tRNA(Tyr) in a two-step reaction: tyrosine is first activated by ATP to form Tyr-AMP and then transferred to the acceptor end of tRNA(Tyr).</text>
</comment>
<comment type="catalytic activity">
    <reaction evidence="1">
        <text>tRNA(Tyr) + L-tyrosine + ATP = L-tyrosyl-tRNA(Tyr) + AMP + diphosphate + H(+)</text>
        <dbReference type="Rhea" id="RHEA:10220"/>
        <dbReference type="Rhea" id="RHEA-COMP:9706"/>
        <dbReference type="Rhea" id="RHEA-COMP:9707"/>
        <dbReference type="ChEBI" id="CHEBI:15378"/>
        <dbReference type="ChEBI" id="CHEBI:30616"/>
        <dbReference type="ChEBI" id="CHEBI:33019"/>
        <dbReference type="ChEBI" id="CHEBI:58315"/>
        <dbReference type="ChEBI" id="CHEBI:78442"/>
        <dbReference type="ChEBI" id="CHEBI:78536"/>
        <dbReference type="ChEBI" id="CHEBI:456215"/>
        <dbReference type="EC" id="6.1.1.1"/>
    </reaction>
</comment>
<comment type="subunit">
    <text evidence="1">Homodimer.</text>
</comment>
<comment type="subcellular location">
    <subcellularLocation>
        <location evidence="1">Cytoplasm</location>
    </subcellularLocation>
</comment>
<comment type="similarity">
    <text evidence="1">Belongs to the class-I aminoacyl-tRNA synthetase family. TyrS type 1 subfamily.</text>
</comment>